<organism>
    <name type="scientific">Rattus norvegicus</name>
    <name type="common">Rat</name>
    <dbReference type="NCBI Taxonomy" id="10116"/>
    <lineage>
        <taxon>Eukaryota</taxon>
        <taxon>Metazoa</taxon>
        <taxon>Chordata</taxon>
        <taxon>Craniata</taxon>
        <taxon>Vertebrata</taxon>
        <taxon>Euteleostomi</taxon>
        <taxon>Mammalia</taxon>
        <taxon>Eutheria</taxon>
        <taxon>Euarchontoglires</taxon>
        <taxon>Glires</taxon>
        <taxon>Rodentia</taxon>
        <taxon>Myomorpha</taxon>
        <taxon>Muroidea</taxon>
        <taxon>Muridae</taxon>
        <taxon>Murinae</taxon>
        <taxon>Rattus</taxon>
    </lineage>
</organism>
<proteinExistence type="evidence at protein level"/>
<sequence length="919" mass="104071">MTAPWRRLRSLVWEYWAGFLVCAFWIPDSRGMPHVIRIGGIFEYADGPNAQVMNAEEHAFRFSANIINRNRTLLPNTTLTYDIQRIHFHDSFEATKKACDQLALGVVAIFGPSQGSCTNAVQSICNALEVPHIQLRWKHHPLDNKDTFYVNLYPDYASLSHAILDLVQSLKWRSATVVYDDSTGLIRLQELIMAPSRYNIRLKIRQLPIDSDDSRPLLKEMKRGREFRIIFDCSHTMAAQILKQAMAMGMMTEYYHFIFTTLDLYALDLEPYRYSGVNLTGFRILNVDNAHVSAIVEKWSMERLQAAPRAESGLLDGVMMTDAALLYDAVHIVSVCYQRASQMTVNSLQCHRHKPWRFGGRFMNFIKEAQWEGLTGRIVFNKTSGLRTDFDLDIISLKEDGLEKVGVWSPADGLNITEVAKGRGPNVTDSLTNRSLIVTTLLEEPFVMFRKSDRTLYGNDRFEGYCIDLLKELAHILGFSYEIRLVEDGKYGAQDDKGQWNGMVKELIDHKADLAVAPLTITHVREKAIDFSKPFMTLGVSILYRKPNGTNPSVFSFLNPLSPDIWMYVLLAYLGVSCVLFVIARFSPYEWYDAHPCNPGSEVVENNFTLLNSFWFGMGSLMQQGSELMPKALSTRIIGGIWWFFTLIIISSYTANLAAFLTVERMESPIDSADDLAKQTKIEYGAVKDGATMTFFKKSKISTFEKMWAFMSSKPSALVKNNEEGIQRTLTADYALLMESTTIEYITQRNCNLTQIGGLIDSKGYGIGTPMGSPYRDKITIAILQLQEEDKLHIMKEKWWRGSGCPEEENKEASALGIQKIGGIFIVLAAGLVLSVLVAVGEFIYKLRKTAEREQRSFCSTVADEIRFSLTCQRRLKHKPQPPMMVKTDAVINMHTFNDRRLPGKDSMSCSTSLAPVFP</sequence>
<evidence type="ECO:0000250" key="1">
    <source>
        <dbReference type="UniProtKB" id="B1AS29"/>
    </source>
</evidence>
<evidence type="ECO:0000250" key="2">
    <source>
        <dbReference type="UniProtKB" id="Q13002"/>
    </source>
</evidence>
<evidence type="ECO:0000255" key="3"/>
<evidence type="ECO:0000269" key="4">
    <source>
    </source>
</evidence>
<evidence type="ECO:0000269" key="5">
    <source>
    </source>
</evidence>
<evidence type="ECO:0000269" key="6">
    <source>
    </source>
</evidence>
<evidence type="ECO:0000269" key="7">
    <source>
    </source>
</evidence>
<evidence type="ECO:0000269" key="8">
    <source>
    </source>
</evidence>
<evidence type="ECO:0000269" key="9">
    <source>
    </source>
</evidence>
<evidence type="ECO:0000269" key="10">
    <source>
    </source>
</evidence>
<evidence type="ECO:0000269" key="11">
    <source>
    </source>
</evidence>
<evidence type="ECO:0000303" key="12">
    <source>
    </source>
</evidence>
<evidence type="ECO:0000305" key="13"/>
<evidence type="ECO:0000305" key="14">
    <source>
    </source>
</evidence>
<evidence type="ECO:0007744" key="15">
    <source>
        <dbReference type="PDB" id="3S9E"/>
    </source>
</evidence>
<evidence type="ECO:0007744" key="16">
    <source>
    </source>
</evidence>
<evidence type="ECO:0007829" key="17">
    <source>
        <dbReference type="PDB" id="3OLZ"/>
    </source>
</evidence>
<evidence type="ECO:0007829" key="18">
    <source>
        <dbReference type="PDB" id="3S9E"/>
    </source>
</evidence>
<evidence type="ECO:0007829" key="19">
    <source>
        <dbReference type="PDB" id="3U94"/>
    </source>
</evidence>
<dbReference type="EMBL" id="Z11716">
    <property type="protein sequence ID" value="CAA77779.1"/>
    <property type="molecule type" value="mRNA"/>
</dbReference>
<dbReference type="EMBL" id="AF027331">
    <property type="protein sequence ID" value="AAC53462.1"/>
    <property type="molecule type" value="mRNA"/>
</dbReference>
<dbReference type="EMBL" id="M83552">
    <property type="protein sequence ID" value="AAC80577.1"/>
    <property type="molecule type" value="mRNA"/>
</dbReference>
<dbReference type="PIR" id="I53474">
    <property type="entry name" value="I53474"/>
</dbReference>
<dbReference type="PIR" id="S19810">
    <property type="entry name" value="S19810"/>
</dbReference>
<dbReference type="RefSeq" id="NP_001106187.1">
    <property type="nucleotide sequence ID" value="NM_001112716.1"/>
</dbReference>
<dbReference type="RefSeq" id="NP_852038.2">
    <property type="nucleotide sequence ID" value="NM_181373.3"/>
</dbReference>
<dbReference type="PDB" id="3OLZ">
    <property type="method" value="X-ray"/>
    <property type="resolution" value="2.75 A"/>
    <property type="chains" value="A/B=32-423"/>
</dbReference>
<dbReference type="PDB" id="3S9E">
    <property type="method" value="X-ray"/>
    <property type="resolution" value="1.60 A"/>
    <property type="chains" value="A/B=432-546, A/B=669-806"/>
</dbReference>
<dbReference type="PDB" id="3U92">
    <property type="method" value="X-ray"/>
    <property type="resolution" value="1.90 A"/>
    <property type="chains" value="A/B=433-546, A/B=669-807"/>
</dbReference>
<dbReference type="PDB" id="3U93">
    <property type="method" value="X-ray"/>
    <property type="resolution" value="1.88 A"/>
    <property type="chains" value="A/B=433-546, A/B=669-807"/>
</dbReference>
<dbReference type="PDB" id="3U94">
    <property type="method" value="X-ray"/>
    <property type="resolution" value="1.96 A"/>
    <property type="chains" value="A/B/C/D=433-546, A/B/C/D=669-807"/>
</dbReference>
<dbReference type="PDB" id="4E0W">
    <property type="method" value="X-ray"/>
    <property type="resolution" value="2.35 A"/>
    <property type="chains" value="A=432-546, A=669-806"/>
</dbReference>
<dbReference type="PDB" id="4G8N">
    <property type="method" value="X-ray"/>
    <property type="resolution" value="2.30 A"/>
    <property type="chains" value="A=432-546, A=669-806"/>
</dbReference>
<dbReference type="PDB" id="4IGR">
    <property type="method" value="X-ray"/>
    <property type="resolution" value="2.65 A"/>
    <property type="chains" value="A=432-546, A=669-806"/>
</dbReference>
<dbReference type="PDB" id="4MH5">
    <property type="method" value="X-ray"/>
    <property type="resolution" value="1.65 A"/>
    <property type="chains" value="A=432-546, A=669-806"/>
</dbReference>
<dbReference type="PDB" id="4NWC">
    <property type="method" value="X-ray"/>
    <property type="resolution" value="2.01 A"/>
    <property type="chains" value="A=432-546, A=669-806"/>
</dbReference>
<dbReference type="PDB" id="4NWD">
    <property type="method" value="X-ray"/>
    <property type="resolution" value="2.60 A"/>
    <property type="chains" value="A=432-546, A=669-806"/>
</dbReference>
<dbReference type="PDB" id="5NF6">
    <property type="method" value="X-ray"/>
    <property type="resolution" value="2.55 A"/>
    <property type="chains" value="A/B=432-546, A/B=669-806"/>
</dbReference>
<dbReference type="PDB" id="5O4F">
    <property type="method" value="X-ray"/>
    <property type="resolution" value="2.10 A"/>
    <property type="chains" value="A/B=432-546, A/B=669-806"/>
</dbReference>
<dbReference type="PDB" id="6F28">
    <property type="method" value="X-ray"/>
    <property type="resolution" value="2.40 A"/>
    <property type="chains" value="A/B=432-546, A/B=669-806"/>
</dbReference>
<dbReference type="PDB" id="6F29">
    <property type="method" value="X-ray"/>
    <property type="resolution" value="2.60 A"/>
    <property type="chains" value="A=432-546, A=669-806"/>
</dbReference>
<dbReference type="PDB" id="6JFY">
    <property type="method" value="EM"/>
    <property type="resolution" value="7.40 A"/>
    <property type="chains" value="A/B/C/D=32-840"/>
</dbReference>
<dbReference type="PDB" id="6JFZ">
    <property type="method" value="EM"/>
    <property type="resolution" value="7.60 A"/>
    <property type="chains" value="A/B/C/D=32-840"/>
</dbReference>
<dbReference type="PDB" id="6JMV">
    <property type="method" value="X-ray"/>
    <property type="resolution" value="1.83 A"/>
    <property type="chains" value="A/B=433-546, A/B=669-807"/>
</dbReference>
<dbReference type="PDB" id="6KZM">
    <property type="method" value="EM"/>
    <property type="resolution" value="9.60 A"/>
    <property type="chains" value="A/B/C/D=34-855"/>
</dbReference>
<dbReference type="PDB" id="6L6F">
    <property type="method" value="EM"/>
    <property type="resolution" value="10.60 A"/>
    <property type="chains" value="A/B/C/D=32-855"/>
</dbReference>
<dbReference type="PDB" id="7VM2">
    <property type="method" value="EM"/>
    <property type="resolution" value="5.90 A"/>
    <property type="chains" value="A/B/C/D=32-840"/>
</dbReference>
<dbReference type="PDB" id="8BST">
    <property type="method" value="X-ray"/>
    <property type="resolution" value="2.70 A"/>
    <property type="chains" value="A/B/C/D=432-546, A/B/C/D=669-806"/>
</dbReference>
<dbReference type="PDB" id="8BSU">
    <property type="method" value="X-ray"/>
    <property type="resolution" value="2.90 A"/>
    <property type="chains" value="A/B/C/D/E/F/G/H=432-546, A/B/C/D/E/F/G/H=669-806"/>
</dbReference>
<dbReference type="PDBsum" id="3OLZ"/>
<dbReference type="PDBsum" id="3S9E"/>
<dbReference type="PDBsum" id="3U92"/>
<dbReference type="PDBsum" id="3U93"/>
<dbReference type="PDBsum" id="3U94"/>
<dbReference type="PDBsum" id="4E0W"/>
<dbReference type="PDBsum" id="4G8N"/>
<dbReference type="PDBsum" id="4IGR"/>
<dbReference type="PDBsum" id="4MH5"/>
<dbReference type="PDBsum" id="4NWC"/>
<dbReference type="PDBsum" id="4NWD"/>
<dbReference type="PDBsum" id="5NF6"/>
<dbReference type="PDBsum" id="5O4F"/>
<dbReference type="PDBsum" id="6F28"/>
<dbReference type="PDBsum" id="6F29"/>
<dbReference type="PDBsum" id="6JFY"/>
<dbReference type="PDBsum" id="6JFZ"/>
<dbReference type="PDBsum" id="6JMV"/>
<dbReference type="PDBsum" id="6KZM"/>
<dbReference type="PDBsum" id="6L6F"/>
<dbReference type="PDBsum" id="7VM2"/>
<dbReference type="PDBsum" id="8BST"/>
<dbReference type="PDBsum" id="8BSU"/>
<dbReference type="EMDB" id="EMD-13970"/>
<dbReference type="EMDB" id="EMD-13971"/>
<dbReference type="EMDB" id="EMD-13973"/>
<dbReference type="EMDB" id="EMD-13974"/>
<dbReference type="EMDB" id="EMD-32032"/>
<dbReference type="EMDB" id="EMD-44123"/>
<dbReference type="EMDB" id="EMD-44126"/>
<dbReference type="EMDB" id="EMD-44127"/>
<dbReference type="EMDB" id="EMD-9821"/>
<dbReference type="EMDB" id="EMD-9822"/>
<dbReference type="SMR" id="P42264"/>
<dbReference type="ComplexPortal" id="CPX-8608">
    <property type="entry name" value="GluK1-GluK3-GluK5 glutamate ionotropic kainate-type receptor complex"/>
</dbReference>
<dbReference type="ComplexPortal" id="CPX-8610">
    <property type="entry name" value="GluK1-GluK2-GluK3-GluK5 glutamate ionotropic kainate-type receptor complex"/>
</dbReference>
<dbReference type="ComplexPortal" id="CPX-8611">
    <property type="entry name" value="GluK3 glutamate ionotropic kainate-type receptor complex"/>
</dbReference>
<dbReference type="ComplexPortal" id="CPX-8613">
    <property type="entry name" value="GluK1-GluK3 glutamate ionotropic kainate-type receptor complex"/>
</dbReference>
<dbReference type="ComplexPortal" id="CPX-8614">
    <property type="entry name" value="GluK2-GluK3 glutamate ionotropic kainate-type receptor complex"/>
</dbReference>
<dbReference type="ComplexPortal" id="CPX-8615">
    <property type="entry name" value="GluK3-GluK5 glutamate ionotropic kainate-type receptor complex"/>
</dbReference>
<dbReference type="FunCoup" id="P42264">
    <property type="interactions" value="1398"/>
</dbReference>
<dbReference type="IntAct" id="P42264">
    <property type="interactions" value="3"/>
</dbReference>
<dbReference type="STRING" id="10116.ENSRNOP00000048216"/>
<dbReference type="BindingDB" id="P42264"/>
<dbReference type="ChEMBL" id="CHEMBL3744"/>
<dbReference type="DrugCentral" id="P42264"/>
<dbReference type="GuidetoPHARMACOLOGY" id="452"/>
<dbReference type="GlyCosmos" id="P42264">
    <property type="glycosylation" value="10 sites, No reported glycans"/>
</dbReference>
<dbReference type="GlyGen" id="P42264">
    <property type="glycosylation" value="10 sites"/>
</dbReference>
<dbReference type="iPTMnet" id="P42264"/>
<dbReference type="PhosphoSitePlus" id="P42264"/>
<dbReference type="PaxDb" id="10116-ENSRNOP00000048216"/>
<dbReference type="GeneID" id="298521"/>
<dbReference type="KEGG" id="rno:298521"/>
<dbReference type="UCSC" id="RGD:71027">
    <molecule id="P42264-1"/>
    <property type="organism name" value="rat"/>
</dbReference>
<dbReference type="AGR" id="RGD:71027"/>
<dbReference type="CTD" id="2899"/>
<dbReference type="RGD" id="71027">
    <property type="gene designation" value="Grik3"/>
</dbReference>
<dbReference type="eggNOG" id="KOG1052">
    <property type="taxonomic scope" value="Eukaryota"/>
</dbReference>
<dbReference type="InParanoid" id="P42264"/>
<dbReference type="OrthoDB" id="5984008at2759"/>
<dbReference type="PhylomeDB" id="P42264"/>
<dbReference type="Reactome" id="R-RNO-451308">
    <property type="pathway name" value="Activation of Ca-permeable Kainate Receptor"/>
</dbReference>
<dbReference type="Reactome" id="R-RNO-500657">
    <property type="pathway name" value="Presynaptic function of Kainate receptors"/>
</dbReference>
<dbReference type="EvolutionaryTrace" id="P42264"/>
<dbReference type="PRO" id="PR:P42264"/>
<dbReference type="Proteomes" id="UP000002494">
    <property type="component" value="Unplaced"/>
</dbReference>
<dbReference type="GO" id="GO:0030424">
    <property type="term" value="C:axon"/>
    <property type="evidence" value="ECO:0000314"/>
    <property type="project" value="RGD"/>
</dbReference>
<dbReference type="GO" id="GO:0098683">
    <property type="term" value="C:cochlear hair cell ribbon synapse"/>
    <property type="evidence" value="ECO:0000314"/>
    <property type="project" value="SynGO"/>
</dbReference>
<dbReference type="GO" id="GO:0030425">
    <property type="term" value="C:dendrite"/>
    <property type="evidence" value="ECO:0000314"/>
    <property type="project" value="UniProtKB"/>
</dbReference>
<dbReference type="GO" id="GO:0032839">
    <property type="term" value="C:dendrite cytoplasm"/>
    <property type="evidence" value="ECO:0000314"/>
    <property type="project" value="RGD"/>
</dbReference>
<dbReference type="GO" id="GO:0098978">
    <property type="term" value="C:glutamatergic synapse"/>
    <property type="evidence" value="ECO:0000266"/>
    <property type="project" value="RGD"/>
</dbReference>
<dbReference type="GO" id="GO:0032983">
    <property type="term" value="C:kainate selective glutamate receptor complex"/>
    <property type="evidence" value="ECO:0000318"/>
    <property type="project" value="GO_Central"/>
</dbReference>
<dbReference type="GO" id="GO:0043204">
    <property type="term" value="C:perikaryon"/>
    <property type="evidence" value="ECO:0000314"/>
    <property type="project" value="RGD"/>
</dbReference>
<dbReference type="GO" id="GO:0005886">
    <property type="term" value="C:plasma membrane"/>
    <property type="evidence" value="ECO:0000266"/>
    <property type="project" value="RGD"/>
</dbReference>
<dbReference type="GO" id="GO:0098839">
    <property type="term" value="C:postsynaptic density membrane"/>
    <property type="evidence" value="ECO:0000266"/>
    <property type="project" value="RGD"/>
</dbReference>
<dbReference type="GO" id="GO:0045211">
    <property type="term" value="C:postsynaptic membrane"/>
    <property type="evidence" value="ECO:0000304"/>
    <property type="project" value="UniProtKB"/>
</dbReference>
<dbReference type="GO" id="GO:0042734">
    <property type="term" value="C:presynaptic membrane"/>
    <property type="evidence" value="ECO:0000314"/>
    <property type="project" value="SynGO"/>
</dbReference>
<dbReference type="GO" id="GO:0043195">
    <property type="term" value="C:terminal bouton"/>
    <property type="evidence" value="ECO:0000314"/>
    <property type="project" value="RGD"/>
</dbReference>
<dbReference type="GO" id="GO:0001640">
    <property type="term" value="F:adenylate cyclase inhibiting G protein-coupled glutamate receptor activity"/>
    <property type="evidence" value="ECO:0000266"/>
    <property type="project" value="RGD"/>
</dbReference>
<dbReference type="GO" id="GO:0008066">
    <property type="term" value="F:glutamate receptor activity"/>
    <property type="evidence" value="ECO:0000314"/>
    <property type="project" value="RGD"/>
</dbReference>
<dbReference type="GO" id="GO:0022849">
    <property type="term" value="F:glutamate-gated calcium ion channel activity"/>
    <property type="evidence" value="ECO:0000266"/>
    <property type="project" value="RGD"/>
</dbReference>
<dbReference type="GO" id="GO:0004970">
    <property type="term" value="F:glutamate-gated receptor activity"/>
    <property type="evidence" value="ECO:0000314"/>
    <property type="project" value="UniProtKB"/>
</dbReference>
<dbReference type="GO" id="GO:0015277">
    <property type="term" value="F:kainate selective glutamate receptor activity"/>
    <property type="evidence" value="ECO:0000266"/>
    <property type="project" value="RGD"/>
</dbReference>
<dbReference type="GO" id="GO:0099507">
    <property type="term" value="F:ligand-gated monoatomic ion channel activity involved in regulation of presynaptic membrane potential"/>
    <property type="evidence" value="ECO:0000266"/>
    <property type="project" value="RGD"/>
</dbReference>
<dbReference type="GO" id="GO:1904315">
    <property type="term" value="F:transmitter-gated monoatomic ion channel activity involved in regulation of postsynaptic membrane potential"/>
    <property type="evidence" value="ECO:0000318"/>
    <property type="project" value="GO_Central"/>
</dbReference>
<dbReference type="GO" id="GO:0007268">
    <property type="term" value="P:chemical synaptic transmission"/>
    <property type="evidence" value="ECO:0000303"/>
    <property type="project" value="RGD"/>
</dbReference>
<dbReference type="GO" id="GO:0007216">
    <property type="term" value="P:G protein-coupled glutamate receptor signaling pathway"/>
    <property type="evidence" value="ECO:0000266"/>
    <property type="project" value="RGD"/>
</dbReference>
<dbReference type="GO" id="GO:0007215">
    <property type="term" value="P:glutamate receptor signaling pathway"/>
    <property type="evidence" value="ECO:0000266"/>
    <property type="project" value="RGD"/>
</dbReference>
<dbReference type="GO" id="GO:0050804">
    <property type="term" value="P:modulation of chemical synaptic transmission"/>
    <property type="evidence" value="ECO:0000318"/>
    <property type="project" value="GO_Central"/>
</dbReference>
<dbReference type="GO" id="GO:0051967">
    <property type="term" value="P:negative regulation of synaptic transmission, glutamatergic"/>
    <property type="evidence" value="ECO:0000314"/>
    <property type="project" value="UniProtKB"/>
</dbReference>
<dbReference type="GO" id="GO:0042391">
    <property type="term" value="P:regulation of membrane potential"/>
    <property type="evidence" value="ECO:0000314"/>
    <property type="project" value="MGI"/>
</dbReference>
<dbReference type="GO" id="GO:0035249">
    <property type="term" value="P:synaptic transmission, glutamatergic"/>
    <property type="evidence" value="ECO:0000318"/>
    <property type="project" value="GO_Central"/>
</dbReference>
<dbReference type="CDD" id="cd06382">
    <property type="entry name" value="PBP1_iGluR_Kainate"/>
    <property type="match status" value="1"/>
</dbReference>
<dbReference type="CDD" id="cd13723">
    <property type="entry name" value="PBP2_iGluR_Kainate_GluR7"/>
    <property type="match status" value="1"/>
</dbReference>
<dbReference type="FunFam" id="3.40.50.2300:FF:000010">
    <property type="entry name" value="Glutamate ionotropic receptor kainate type subunit 1"/>
    <property type="match status" value="1"/>
</dbReference>
<dbReference type="FunFam" id="3.40.190.10:FF:000210">
    <property type="entry name" value="Glutamate receptor ionotropic, kainate 1"/>
    <property type="match status" value="1"/>
</dbReference>
<dbReference type="FunFam" id="3.40.190.10:FF:000240">
    <property type="entry name" value="Glutamate receptor ionotropic, kainate 2"/>
    <property type="match status" value="1"/>
</dbReference>
<dbReference type="FunFam" id="1.10.287.70:FF:000010">
    <property type="entry name" value="Putative glutamate receptor ionotropic kainate 1"/>
    <property type="match status" value="1"/>
</dbReference>
<dbReference type="Gene3D" id="1.10.287.70">
    <property type="match status" value="1"/>
</dbReference>
<dbReference type="Gene3D" id="3.40.50.2300">
    <property type="match status" value="2"/>
</dbReference>
<dbReference type="Gene3D" id="3.40.190.10">
    <property type="entry name" value="Periplasmic binding protein-like II"/>
    <property type="match status" value="1"/>
</dbReference>
<dbReference type="InterPro" id="IPR001828">
    <property type="entry name" value="ANF_lig-bd_rcpt"/>
</dbReference>
<dbReference type="InterPro" id="IPR019594">
    <property type="entry name" value="Glu/Gly-bd"/>
</dbReference>
<dbReference type="InterPro" id="IPR001508">
    <property type="entry name" value="Iono_Glu_rcpt_met"/>
</dbReference>
<dbReference type="InterPro" id="IPR015683">
    <property type="entry name" value="Ionotropic_Glu_rcpt"/>
</dbReference>
<dbReference type="InterPro" id="IPR001320">
    <property type="entry name" value="Iontro_rcpt_C"/>
</dbReference>
<dbReference type="InterPro" id="IPR028082">
    <property type="entry name" value="Peripla_BP_I"/>
</dbReference>
<dbReference type="PANTHER" id="PTHR18966">
    <property type="entry name" value="IONOTROPIC GLUTAMATE RECEPTOR"/>
    <property type="match status" value="1"/>
</dbReference>
<dbReference type="Pfam" id="PF01094">
    <property type="entry name" value="ANF_receptor"/>
    <property type="match status" value="1"/>
</dbReference>
<dbReference type="Pfam" id="PF00060">
    <property type="entry name" value="Lig_chan"/>
    <property type="match status" value="1"/>
</dbReference>
<dbReference type="Pfam" id="PF10613">
    <property type="entry name" value="Lig_chan-Glu_bd"/>
    <property type="match status" value="1"/>
</dbReference>
<dbReference type="PRINTS" id="PR00177">
    <property type="entry name" value="NMDARECEPTOR"/>
</dbReference>
<dbReference type="SMART" id="SM00918">
    <property type="entry name" value="Lig_chan-Glu_bd"/>
    <property type="match status" value="1"/>
</dbReference>
<dbReference type="SMART" id="SM00079">
    <property type="entry name" value="PBPe"/>
    <property type="match status" value="1"/>
</dbReference>
<dbReference type="SUPFAM" id="SSF53822">
    <property type="entry name" value="Periplasmic binding protein-like I"/>
    <property type="match status" value="1"/>
</dbReference>
<dbReference type="SUPFAM" id="SSF53850">
    <property type="entry name" value="Periplasmic binding protein-like II"/>
    <property type="match status" value="1"/>
</dbReference>
<gene>
    <name type="primary">Grik3</name>
    <name type="synonym">Glur7</name>
</gene>
<comment type="function">
    <text evidence="1 6 7 10">Ionotropic glutamate receptor that functions as a cation-permeable ligand-gated ion channel, gated by L-glutamate and the glutamatergic agonist kainic acid. Binding of the excitatory neurotransmitter L-glutamate induces a conformation change, leading to the opening of the cation channel, and thereby converts the chemical signal to an electrical impulse. The receptor then desensitizes rapidly and enters a transient inactive state, characterized by the presence of bound agonist (PubMed:1322826, PubMed:1371217, PubMed:21907808). In association with GRIK2, involved in presynaptic facilitation of glutamate release at hippocampal mossy fiber synapses (By similarity).</text>
</comment>
<comment type="function">
    <molecule>Isoform GluR7B</molecule>
    <text evidence="11">Ionotropic glutamate receptor that functions as a ligand-gated cation channel, gated by L-glutamate and the glutamatergic agonist kainic acid.</text>
</comment>
<comment type="catalytic activity">
    <reaction evidence="1">
        <text>Ca(2+)(in) = Ca(2+)(out)</text>
        <dbReference type="Rhea" id="RHEA:29671"/>
        <dbReference type="ChEBI" id="CHEBI:29108"/>
    </reaction>
</comment>
<comment type="subunit">
    <text evidence="1 5 8 9 10">Homotetramer, and heterotetramer with GRIK4 or GRIK5 (PubMed:20951142, PubMed:21907808). Can form functional heteromeric receptors with GRIK2 (By similarity). Interacts with PRKCABP (PubMed:11122333). Interacts with NETO2 (PubMed:19217376).</text>
</comment>
<comment type="subunit">
    <molecule>Isoform GluR7A</molecule>
    <text evidence="11">Homomeric GluR7A forms functional kainate receptors which have very low sensitivity to glutamate. Can form functional heteromeric receptors with GRIK4 and GRIK5.</text>
</comment>
<comment type="subunit">
    <molecule>Isoform GluR7B</molecule>
    <text evidence="11">Homomeric GluR7B forms functional kainate receptors.</text>
</comment>
<comment type="interaction">
    <interactant intactId="EBI-48420651">
        <id>P42264</id>
    </interactant>
    <interactant intactId="EBI-15612757">
        <id>P22756</id>
        <label>Grik1</label>
    </interactant>
    <organismsDiffer>false</organismsDiffer>
    <experiments>4</experiments>
</comment>
<comment type="interaction">
    <interactant intactId="EBI-48420779">
        <id>PRO_0000011548</id>
    </interactant>
    <interactant intactId="EBI-48420779">
        <id>PRO_0000011548</id>
        <label>Grik3</label>
        <dbReference type="UniProtKB" id="P42264"/>
    </interactant>
    <organismsDiffer>false</organismsDiffer>
    <experiments>2</experiments>
</comment>
<comment type="subcellular location">
    <subcellularLocation>
        <location evidence="14">Cell membrane</location>
        <topology evidence="3">Multi-pass membrane protein</topology>
    </subcellularLocation>
    <subcellularLocation>
        <location evidence="14">Postsynaptic cell membrane</location>
        <topology evidence="3">Multi-pass membrane protein</topology>
    </subcellularLocation>
</comment>
<comment type="alternative products">
    <event type="alternative splicing"/>
    <isoform>
        <id>P42264-1</id>
        <name>GluR7A</name>
        <sequence type="displayed"/>
    </isoform>
    <isoform>
        <id>P42264-2</id>
        <name>GluR7B</name>
        <sequence type="described" ref="VSP_000135"/>
    </isoform>
</comment>
<comment type="tissue specificity">
    <text evidence="4 6">Expressed in the olfactory bulb (at protein level) (PubMed:10023812). Expressed in the deep cortical layers, dentate gyrus, reticular thalamic nucleus, mammillary bodies, pons, and cerebellum of the adult (PubMed:1322826).</text>
</comment>
<comment type="developmental stage">
    <text evidence="6">Expressed in both adult and embryonic CNS.</text>
</comment>
<comment type="PTM">
    <text evidence="9">Mass spectrometry data suggest the protein is N-glycosylated at five distinct sites.</text>
</comment>
<comment type="miscellaneous">
    <text evidence="7">The postsynaptic actions of Glu are mediated by a variety of receptors that are named according to their selective agonists. This receptor binds domoate &gt; kainate &gt;&gt; L-glutamate = quisqualate &gt;&gt; AMPA = NMDA.</text>
</comment>
<comment type="similarity">
    <text evidence="13">Belongs to the glutamate-gated ion channel (TC 1.A.10.1) family. GRIK3 subfamily.</text>
</comment>
<keyword id="KW-0002">3D-structure</keyword>
<keyword id="KW-0025">Alternative splicing</keyword>
<keyword id="KW-1003">Cell membrane</keyword>
<keyword id="KW-0903">Direct protein sequencing</keyword>
<keyword id="KW-1015">Disulfide bond</keyword>
<keyword id="KW-0325">Glycoprotein</keyword>
<keyword id="KW-0407">Ion channel</keyword>
<keyword id="KW-0406">Ion transport</keyword>
<keyword id="KW-1017">Isopeptide bond</keyword>
<keyword id="KW-1071">Ligand-gated ion channel</keyword>
<keyword id="KW-0472">Membrane</keyword>
<keyword id="KW-0597">Phosphoprotein</keyword>
<keyword id="KW-0628">Postsynaptic cell membrane</keyword>
<keyword id="KW-0675">Receptor</keyword>
<keyword id="KW-1185">Reference proteome</keyword>
<keyword id="KW-0732">Signal</keyword>
<keyword id="KW-0770">Synapse</keyword>
<keyword id="KW-0812">Transmembrane</keyword>
<keyword id="KW-1133">Transmembrane helix</keyword>
<keyword id="KW-0813">Transport</keyword>
<keyword id="KW-0832">Ubl conjugation</keyword>
<protein>
    <recommendedName>
        <fullName>Glutamate receptor ionotropic, kainate 3</fullName>
        <shortName>GluK3</shortName>
    </recommendedName>
    <alternativeName>
        <fullName>Glutamate receptor 7</fullName>
        <shortName>GluR-7</shortName>
        <shortName>GluR7</shortName>
    </alternativeName>
</protein>
<feature type="signal peptide" evidence="9">
    <location>
        <begin position="1"/>
        <end position="31"/>
    </location>
</feature>
<feature type="chain" id="PRO_0000011548" description="Glutamate receptor ionotropic, kainate 3">
    <location>
        <begin position="32"/>
        <end position="919"/>
    </location>
</feature>
<feature type="topological domain" description="Extracellular">
    <location>
        <begin position="32"/>
        <end position="563"/>
    </location>
</feature>
<feature type="transmembrane region" description="Helical" evidence="3">
    <location>
        <begin position="564"/>
        <end position="584"/>
    </location>
</feature>
<feature type="topological domain" description="Cytoplasmic" evidence="3">
    <location>
        <begin position="585"/>
        <end position="636"/>
    </location>
</feature>
<feature type="transmembrane region" description="Helical" evidence="3">
    <location>
        <begin position="637"/>
        <end position="657"/>
    </location>
</feature>
<feature type="topological domain" description="Extracellular" evidence="3">
    <location>
        <begin position="658"/>
        <end position="820"/>
    </location>
</feature>
<feature type="transmembrane region" description="Helical" evidence="3">
    <location>
        <begin position="821"/>
        <end position="841"/>
    </location>
</feature>
<feature type="topological domain" description="Cytoplasmic" evidence="3">
    <location>
        <begin position="842"/>
        <end position="919"/>
    </location>
</feature>
<feature type="binding site" evidence="10 15">
    <location>
        <position position="518"/>
    </location>
    <ligand>
        <name>L-glutamate</name>
        <dbReference type="ChEBI" id="CHEBI:29985"/>
    </ligand>
</feature>
<feature type="binding site" evidence="10 15">
    <location>
        <position position="520"/>
    </location>
    <ligand>
        <name>L-glutamate</name>
        <dbReference type="ChEBI" id="CHEBI:29985"/>
    </ligand>
</feature>
<feature type="binding site" evidence="10 15">
    <location>
        <position position="525"/>
    </location>
    <ligand>
        <name>L-glutamate</name>
        <dbReference type="ChEBI" id="CHEBI:29985"/>
    </ligand>
</feature>
<feature type="binding site" evidence="10 15">
    <location>
        <position position="691"/>
    </location>
    <ligand>
        <name>L-glutamate</name>
        <dbReference type="ChEBI" id="CHEBI:29985"/>
    </ligand>
</feature>
<feature type="binding site" evidence="10 15">
    <location>
        <position position="692"/>
    </location>
    <ligand>
        <name>L-glutamate</name>
        <dbReference type="ChEBI" id="CHEBI:29985"/>
    </ligand>
</feature>
<feature type="binding site" evidence="10 15">
    <location>
        <position position="739"/>
    </location>
    <ligand>
        <name>L-glutamate</name>
        <dbReference type="ChEBI" id="CHEBI:29985"/>
    </ligand>
</feature>
<feature type="modified residue" description="Phosphoserine" evidence="2">
    <location>
        <position position="869"/>
    </location>
</feature>
<feature type="glycosylation site" description="N-linked (GlcNAc...) asparagine" evidence="9">
    <location>
        <position position="70"/>
    </location>
</feature>
<feature type="glycosylation site" description="N-linked (GlcNAc...) asparagine" evidence="3">
    <location>
        <position position="76"/>
    </location>
</feature>
<feature type="glycosylation site" description="N-linked (GlcNAc...) asparagine" evidence="9 16">
    <location>
        <position position="278"/>
    </location>
</feature>
<feature type="glycosylation site" description="N-linked (GlcNAc...) asparagine" evidence="9">
    <location>
        <position position="381"/>
    </location>
</feature>
<feature type="glycosylation site" description="N-linked (GlcNAc...) asparagine" evidence="3">
    <location>
        <position position="415"/>
    </location>
</feature>
<feature type="glycosylation site" description="N-linked (GlcNAc...) asparagine" evidence="3">
    <location>
        <position position="426"/>
    </location>
</feature>
<feature type="glycosylation site" description="N-linked (GlcNAc...) asparagine" evidence="3">
    <location>
        <position position="433"/>
    </location>
</feature>
<feature type="glycosylation site" description="N-linked (GlcNAc...) asparagine" evidence="3">
    <location>
        <position position="548"/>
    </location>
</feature>
<feature type="glycosylation site" description="N-linked (GlcNAc...) asparagine" evidence="3">
    <location>
        <position position="551"/>
    </location>
</feature>
<feature type="glycosylation site" description="N-linked (GlcNAc...) asparagine" evidence="3">
    <location>
        <position position="752"/>
    </location>
</feature>
<feature type="disulfide bond" evidence="9">
    <location>
        <begin position="99"/>
        <end position="350"/>
    </location>
</feature>
<feature type="cross-link" description="Glycyl lysine isopeptide (Lys-Gly) (interchain with G-Cter in SUMO1)" evidence="2">
    <location>
        <position position="887"/>
    </location>
</feature>
<feature type="splice variant" id="VSP_000135" description="In isoform GluR7B." evidence="12">
    <original>RSFCSTVADEIRFSLTCQRRLKHKPQPPMMVKTDAVINMHTFNDRRLPGKDSMSCSTSLAPVFP</original>
    <variation>VRPWRRLRWTGKEALFLQHSGRRDPLLPHLPAASQAQATASYDGQDRCGYQHAHL</variation>
    <location>
        <begin position="856"/>
        <end position="919"/>
    </location>
</feature>
<feature type="sequence conflict" description="In Ref. 4." evidence="13" ref="4">
    <original>T</original>
    <variation>I</variation>
    <location>
        <position position="118"/>
    </location>
</feature>
<feature type="sequence conflict" description="In Ref. 4; AAC80577." evidence="13" ref="4">
    <original>A</original>
    <variation>P</variation>
    <location>
        <position position="290"/>
    </location>
</feature>
<feature type="sequence conflict" description="In Ref. 4; AAC80577." evidence="13" ref="4">
    <original>S</original>
    <variation>P</variation>
    <location>
        <position position="341"/>
    </location>
</feature>
<feature type="sequence conflict" description="In Ref. 4; AAC80577." evidence="13" ref="4">
    <original>P</original>
    <variation>A</variation>
    <location>
        <position position="355"/>
    </location>
</feature>
<feature type="strand" evidence="17">
    <location>
        <begin position="35"/>
        <end position="43"/>
    </location>
</feature>
<feature type="helix" evidence="17">
    <location>
        <begin position="47"/>
        <end position="49"/>
    </location>
</feature>
<feature type="helix" evidence="17">
    <location>
        <begin position="55"/>
        <end position="69"/>
    </location>
</feature>
<feature type="strand" evidence="17">
    <location>
        <begin position="71"/>
        <end position="74"/>
    </location>
</feature>
<feature type="strand" evidence="17">
    <location>
        <begin position="78"/>
        <end position="86"/>
    </location>
</feature>
<feature type="helix" evidence="17">
    <location>
        <begin position="91"/>
        <end position="104"/>
    </location>
</feature>
<feature type="strand" evidence="17">
    <location>
        <begin position="113"/>
        <end position="115"/>
    </location>
</feature>
<feature type="helix" evidence="17">
    <location>
        <begin position="118"/>
        <end position="128"/>
    </location>
</feature>
<feature type="strand" evidence="17">
    <location>
        <begin position="132"/>
        <end position="134"/>
    </location>
</feature>
<feature type="strand" evidence="17">
    <location>
        <begin position="148"/>
        <end position="154"/>
    </location>
</feature>
<feature type="helix" evidence="17">
    <location>
        <begin position="156"/>
        <end position="169"/>
    </location>
</feature>
<feature type="strand" evidence="17">
    <location>
        <begin position="173"/>
        <end position="181"/>
    </location>
</feature>
<feature type="helix" evidence="17">
    <location>
        <begin position="184"/>
        <end position="187"/>
    </location>
</feature>
<feature type="helix" evidence="17">
    <location>
        <begin position="189"/>
        <end position="192"/>
    </location>
</feature>
<feature type="turn" evidence="17">
    <location>
        <begin position="195"/>
        <end position="197"/>
    </location>
</feature>
<feature type="strand" evidence="17">
    <location>
        <begin position="201"/>
        <end position="206"/>
    </location>
</feature>
<feature type="helix" evidence="17">
    <location>
        <begin position="215"/>
        <end position="223"/>
    </location>
</feature>
<feature type="strand" evidence="17">
    <location>
        <begin position="228"/>
        <end position="233"/>
    </location>
</feature>
<feature type="helix" evidence="17">
    <location>
        <begin position="235"/>
        <end position="247"/>
    </location>
</feature>
<feature type="strand" evidence="17">
    <location>
        <begin position="256"/>
        <end position="259"/>
    </location>
</feature>
<feature type="helix" evidence="17">
    <location>
        <begin position="264"/>
        <end position="266"/>
    </location>
</feature>
<feature type="turn" evidence="17">
    <location>
        <begin position="270"/>
        <end position="275"/>
    </location>
</feature>
<feature type="strand" evidence="17">
    <location>
        <begin position="278"/>
        <end position="283"/>
    </location>
</feature>
<feature type="helix" evidence="17">
    <location>
        <begin position="290"/>
        <end position="302"/>
    </location>
</feature>
<feature type="helix" evidence="17">
    <location>
        <begin position="321"/>
        <end position="339"/>
    </location>
</feature>
<feature type="strand" evidence="17">
    <location>
        <begin position="350"/>
        <end position="352"/>
    </location>
</feature>
<feature type="helix" evidence="17">
    <location>
        <begin position="359"/>
        <end position="368"/>
    </location>
</feature>
<feature type="strand" evidence="17">
    <location>
        <begin position="370"/>
        <end position="373"/>
    </location>
</feature>
<feature type="strand" evidence="17">
    <location>
        <begin position="376"/>
        <end position="379"/>
    </location>
</feature>
<feature type="turn" evidence="17">
    <location>
        <begin position="382"/>
        <end position="384"/>
    </location>
</feature>
<feature type="strand" evidence="17">
    <location>
        <begin position="392"/>
        <end position="398"/>
    </location>
</feature>
<feature type="strand" evidence="17">
    <location>
        <begin position="401"/>
        <end position="409"/>
    </location>
</feature>
<feature type="turn" evidence="17">
    <location>
        <begin position="410"/>
        <end position="412"/>
    </location>
</feature>
<feature type="strand" evidence="17">
    <location>
        <begin position="413"/>
        <end position="415"/>
    </location>
</feature>
<feature type="strand" evidence="18">
    <location>
        <begin position="436"/>
        <end position="440"/>
    </location>
</feature>
<feature type="turn" evidence="18">
    <location>
        <begin position="444"/>
        <end position="446"/>
    </location>
</feature>
<feature type="strand" evidence="18">
    <location>
        <begin position="447"/>
        <end position="449"/>
    </location>
</feature>
<feature type="helix" evidence="18">
    <location>
        <begin position="458"/>
        <end position="461"/>
    </location>
</feature>
<feature type="strand" evidence="18">
    <location>
        <begin position="462"/>
        <end position="464"/>
    </location>
</feature>
<feature type="helix" evidence="18">
    <location>
        <begin position="465"/>
        <end position="477"/>
    </location>
</feature>
<feature type="strand" evidence="18">
    <location>
        <begin position="481"/>
        <end position="485"/>
    </location>
</feature>
<feature type="strand" evidence="19">
    <location>
        <begin position="496"/>
        <end position="498"/>
    </location>
</feature>
<feature type="helix" evidence="18">
    <location>
        <begin position="502"/>
        <end position="508"/>
    </location>
</feature>
<feature type="strand" evidence="18">
    <location>
        <begin position="513"/>
        <end position="520"/>
    </location>
</feature>
<feature type="helix" evidence="18">
    <location>
        <begin position="523"/>
        <end position="526"/>
    </location>
</feature>
<feature type="strand" evidence="18">
    <location>
        <begin position="529"/>
        <end position="531"/>
    </location>
</feature>
<feature type="strand" evidence="18">
    <location>
        <begin position="535"/>
        <end position="538"/>
    </location>
</feature>
<feature type="strand" evidence="18">
    <location>
        <begin position="540"/>
        <end position="546"/>
    </location>
</feature>
<feature type="helix" evidence="18">
    <location>
        <begin position="673"/>
        <end position="677"/>
    </location>
</feature>
<feature type="strand" evidence="18">
    <location>
        <begin position="680"/>
        <end position="685"/>
    </location>
</feature>
<feature type="helix" evidence="18">
    <location>
        <begin position="691"/>
        <end position="698"/>
    </location>
</feature>
<feature type="helix" evidence="18">
    <location>
        <begin position="702"/>
        <end position="711"/>
    </location>
</feature>
<feature type="turn" evidence="18">
    <location>
        <begin position="715"/>
        <end position="717"/>
    </location>
</feature>
<feature type="strand" evidence="18">
    <location>
        <begin position="718"/>
        <end position="721"/>
    </location>
</feature>
<feature type="helix" evidence="18">
    <location>
        <begin position="722"/>
        <end position="731"/>
    </location>
</feature>
<feature type="strand" evidence="18">
    <location>
        <begin position="732"/>
        <end position="739"/>
    </location>
</feature>
<feature type="helix" evidence="18">
    <location>
        <begin position="740"/>
        <end position="749"/>
    </location>
</feature>
<feature type="strand" evidence="18">
    <location>
        <begin position="753"/>
        <end position="757"/>
    </location>
</feature>
<feature type="strand" evidence="18">
    <location>
        <begin position="763"/>
        <end position="770"/>
    </location>
</feature>
<feature type="helix" evidence="18">
    <location>
        <begin position="776"/>
        <end position="788"/>
    </location>
</feature>
<feature type="helix" evidence="18">
    <location>
        <begin position="791"/>
        <end position="800"/>
    </location>
</feature>
<accession>P42264</accession>
<accession>O35420</accession>
<reference key="1">
    <citation type="journal article" date="1992" name="FEBS Lett.">
        <title>High-affinity kainate and domoate receptors in rat brain.</title>
        <authorList>
            <person name="Lomeli H."/>
            <person name="Wisden W."/>
            <person name="Koehler M."/>
            <person name="Keinaenen K."/>
            <person name="Sommer B."/>
            <person name="Seeburg P.H."/>
        </authorList>
    </citation>
    <scope>NUCLEOTIDE SEQUENCE [MRNA] (ISOFORM GLUR7A)</scope>
    <scope>FUNCTION</scope>
    <scope>TISSUE SPECIFICITY</scope>
    <scope>DEVELOPMENTAL STAGE</scope>
    <source>
        <tissue>Brain</tissue>
    </source>
</reference>
<reference key="2">
    <citation type="submission" date="1994-04" db="EMBL/GenBank/DDBJ databases">
        <authorList>
            <person name="Sprengel R."/>
        </authorList>
    </citation>
    <scope>SEQUENCE REVISION</scope>
</reference>
<reference key="3">
    <citation type="journal article" date="1997" name="Neuron">
        <title>Rat GluR7 and a carboxy-terminal splice variant, GluR7b, are functional kainate receptor subunits with a low sensitivity to glutamate.</title>
        <authorList>
            <person name="Schiffer H.H."/>
            <person name="Swanson G.T."/>
            <person name="Heinemann S.F."/>
        </authorList>
    </citation>
    <scope>NUCLEOTIDE SEQUENCE [MRNA] (ISOFORM GLUR7B)</scope>
    <scope>FUNCTION (ISOFORMS GLUR7A AND GLUR7B)</scope>
    <scope>SUBUNIT (ISOFORMS GLUR7A AND GLUR7B)</scope>
    <source>
        <strain>Sprague-Dawley</strain>
        <tissue>Brain</tissue>
    </source>
</reference>
<reference key="4">
    <citation type="journal article" date="1992" name="Neuron">
        <title>Cloning of a putative glutamate receptor: a low affinity kainate-binding subunit.</title>
        <authorList>
            <person name="Bettler B."/>
            <person name="Egebjerg J."/>
            <person name="Sharma G."/>
            <person name="Pecht G."/>
            <person name="Hermans-Borgmeyer I."/>
            <person name="Moll C."/>
            <person name="Stevens C.F."/>
            <person name="Heinemann S.F."/>
        </authorList>
    </citation>
    <scope>NUCLEOTIDE SEQUENCE [MRNA] OF 32-919 (ISOFORM GLUR7A)</scope>
    <scope>FUNCTION</scope>
</reference>
<reference key="5">
    <citation type="journal article" date="1999" name="J. Comp. Neurol.">
        <title>Differential distribution of ionotropic glutamate receptor subunits in the rat olfactory bulb.</title>
        <authorList>
            <person name="Montague A.A."/>
            <person name="Greer C.A."/>
        </authorList>
    </citation>
    <scope>SUBCELLULAR LOCATION</scope>
    <scope>TISSUE SPECIFICITY</scope>
</reference>
<reference key="6">
    <citation type="journal article" date="2000" name="Eur. J. Neurosci.">
        <title>Interaction of the C-terminal tail region of the metabotropic glutamate receptor 7 with the protein kinase C substrate PICK1.</title>
        <authorList>
            <person name="El Far O."/>
            <person name="Airas J."/>
            <person name="Wischmeyer E."/>
            <person name="Nehring R.B."/>
            <person name="Karschin A."/>
            <person name="Betz H."/>
        </authorList>
    </citation>
    <scope>INTERACTION WITH PRKCABP</scope>
</reference>
<reference key="7">
    <citation type="journal article" date="2009" name="Neuron">
        <title>A transmembrane accessory subunit that modulates kainate-type glutamate receptors.</title>
        <authorList>
            <person name="Zhang W."/>
            <person name="St-Gelais F."/>
            <person name="Grabner C.P."/>
            <person name="Trinidad J.C."/>
            <person name="Sumioka A."/>
            <person name="Morimoto-Tomita M."/>
            <person name="Kim K.S."/>
            <person name="Straub C."/>
            <person name="Burlingame A.L."/>
            <person name="Howe J.R."/>
            <person name="Tomita S."/>
        </authorList>
    </citation>
    <scope>INTERACTION WITH NETO2</scope>
</reference>
<reference key="8">
    <citation type="journal article" date="2013" name="J. Proteome Res.">
        <title>Site-specific glycan-peptide analysis for determination of N-glycoproteome heterogeneity.</title>
        <authorList>
            <person name="Parker B.L."/>
            <person name="Thaysen-Andersen M."/>
            <person name="Solis N."/>
            <person name="Scott N.E."/>
            <person name="Larsen M.R."/>
            <person name="Graham M.E."/>
            <person name="Packer N.H."/>
            <person name="Cordwell S.J."/>
        </authorList>
    </citation>
    <scope>GLYCOSYLATION [LARGE SCALE ANALYSIS] AT ASN-278</scope>
    <scope>IDENTIFICATION BY MASS SPECTROMETRY [LARGE SCALE ANALYSIS]</scope>
    <source>
        <tissue>Brain</tissue>
    </source>
</reference>
<reference key="9">
    <citation type="journal article" date="2010" name="J. Mol. Biol.">
        <title>Crystal structures of the glutamate receptor ion channel GluK3 and GluK5 amino-terminal domains.</title>
        <authorList>
            <person name="Kumar J."/>
            <person name="Mayer M.L."/>
        </authorList>
    </citation>
    <scope>X-RAY CRYSTALLOGRAPHY (2.75 ANGSTROMS) OF 32-423</scope>
    <scope>PROTEIN SEQUENCE OF N-TERMINUS</scope>
    <scope>SUBUNIT</scope>
    <scope>DISULFIDE BOND</scope>
    <scope>GLYCOSYLATION AT ASN-70; ASN-278 AND ASN-381</scope>
    <scope>IDENTIFICATION BY MASS SPECTROMETRY</scope>
</reference>
<reference key="10">
    <citation type="journal article" date="2011" name="J. Struct. Biol.">
        <title>Binding site and interlobe interactions of the ionotropic glutamate receptor GluK3 ligand binding domain revealed by high resolution crystal structure in complex with (S)-glutamate.</title>
        <authorList>
            <person name="Venskutonyte R."/>
            <person name="Frydenvang K."/>
            <person name="Gajhede M."/>
            <person name="Bunch L."/>
            <person name="Pickering D.S."/>
            <person name="Kastrup J.S."/>
        </authorList>
    </citation>
    <scope>X-RAY CRYSTALLOGRAPHY (1.6 ANGSTROMS) OF 432-806 IN COMPLEX WITH GLUTAMATE</scope>
    <scope>FUNCTION</scope>
    <scope>SUBUNIT</scope>
</reference>
<name>GRIK3_RAT</name>